<evidence type="ECO:0000255" key="1">
    <source>
        <dbReference type="HAMAP-Rule" id="MF_01398"/>
    </source>
</evidence>
<dbReference type="EMBL" id="CP000970">
    <property type="protein sequence ID" value="ACB16426.1"/>
    <property type="molecule type" value="Genomic_DNA"/>
</dbReference>
<dbReference type="RefSeq" id="WP_001052219.1">
    <property type="nucleotide sequence ID" value="NC_010498.1"/>
</dbReference>
<dbReference type="SMR" id="B1LL63"/>
<dbReference type="GeneID" id="93778231"/>
<dbReference type="KEGG" id="ecm:EcSMS35_4104"/>
<dbReference type="HOGENOM" id="CLU_079215_4_5_6"/>
<dbReference type="Proteomes" id="UP000007011">
    <property type="component" value="Chromosome"/>
</dbReference>
<dbReference type="GO" id="GO:0005886">
    <property type="term" value="C:plasma membrane"/>
    <property type="evidence" value="ECO:0007669"/>
    <property type="project" value="UniProtKB-SubCell"/>
</dbReference>
<dbReference type="GO" id="GO:0045259">
    <property type="term" value="C:proton-transporting ATP synthase complex"/>
    <property type="evidence" value="ECO:0007669"/>
    <property type="project" value="UniProtKB-KW"/>
</dbReference>
<dbReference type="GO" id="GO:0046933">
    <property type="term" value="F:proton-transporting ATP synthase activity, rotational mechanism"/>
    <property type="evidence" value="ECO:0007669"/>
    <property type="project" value="UniProtKB-UniRule"/>
</dbReference>
<dbReference type="GO" id="GO:0046961">
    <property type="term" value="F:proton-transporting ATPase activity, rotational mechanism"/>
    <property type="evidence" value="ECO:0007669"/>
    <property type="project" value="TreeGrafter"/>
</dbReference>
<dbReference type="CDD" id="cd06503">
    <property type="entry name" value="ATP-synt_Fo_b"/>
    <property type="match status" value="1"/>
</dbReference>
<dbReference type="FunFam" id="1.20.5.620:FF:000001">
    <property type="entry name" value="ATP synthase subunit b"/>
    <property type="match status" value="1"/>
</dbReference>
<dbReference type="Gene3D" id="1.20.5.620">
    <property type="entry name" value="F1F0 ATP synthase subunit B, membrane domain"/>
    <property type="match status" value="1"/>
</dbReference>
<dbReference type="HAMAP" id="MF_01398">
    <property type="entry name" value="ATP_synth_b_bprime"/>
    <property type="match status" value="1"/>
</dbReference>
<dbReference type="InterPro" id="IPR028987">
    <property type="entry name" value="ATP_synth_B-like_membr_sf"/>
</dbReference>
<dbReference type="InterPro" id="IPR002146">
    <property type="entry name" value="ATP_synth_b/b'su_bac/chlpt"/>
</dbReference>
<dbReference type="InterPro" id="IPR005864">
    <property type="entry name" value="ATP_synth_F0_bsu_bac"/>
</dbReference>
<dbReference type="InterPro" id="IPR050059">
    <property type="entry name" value="ATP_synthase_B_chain"/>
</dbReference>
<dbReference type="NCBIfam" id="TIGR01144">
    <property type="entry name" value="ATP_synt_b"/>
    <property type="match status" value="1"/>
</dbReference>
<dbReference type="NCBIfam" id="NF004411">
    <property type="entry name" value="PRK05759.1-2"/>
    <property type="match status" value="1"/>
</dbReference>
<dbReference type="NCBIfam" id="NF004413">
    <property type="entry name" value="PRK05759.1-4"/>
    <property type="match status" value="1"/>
</dbReference>
<dbReference type="PANTHER" id="PTHR33445:SF1">
    <property type="entry name" value="ATP SYNTHASE SUBUNIT B"/>
    <property type="match status" value="1"/>
</dbReference>
<dbReference type="PANTHER" id="PTHR33445">
    <property type="entry name" value="ATP SYNTHASE SUBUNIT B', CHLOROPLASTIC"/>
    <property type="match status" value="1"/>
</dbReference>
<dbReference type="Pfam" id="PF00430">
    <property type="entry name" value="ATP-synt_B"/>
    <property type="match status" value="1"/>
</dbReference>
<dbReference type="SUPFAM" id="SSF81573">
    <property type="entry name" value="F1F0 ATP synthase subunit B, membrane domain"/>
    <property type="match status" value="1"/>
</dbReference>
<sequence length="156" mass="17264">MNLNATILGQAIAFVLFVLFCMKYVWPPLMAAIEKRQKEIADGLASAERAHKDLDLAKASATDQLKKAKAEAQVIIEQANKRRSQILDEAKAEAEQERTKIVAQAQAEIEAERKRAREELRKQVAILAVAGAEKIIERSVDEAANSDIVDKLVAEL</sequence>
<comment type="function">
    <text evidence="1">F(1)F(0) ATP synthase produces ATP from ADP in the presence of a proton or sodium gradient. F-type ATPases consist of two structural domains, F(1) containing the extramembraneous catalytic core and F(0) containing the membrane proton channel, linked together by a central stalk and a peripheral stalk. During catalysis, ATP synthesis in the catalytic domain of F(1) is coupled via a rotary mechanism of the central stalk subunits to proton translocation.</text>
</comment>
<comment type="function">
    <text evidence="1">Component of the F(0) channel, it forms part of the peripheral stalk, linking F(1) to F(0).</text>
</comment>
<comment type="subunit">
    <text evidence="1">F-type ATPases have 2 components, F(1) - the catalytic core - and F(0) - the membrane proton channel. F(1) has five subunits: alpha(3), beta(3), gamma(1), delta(1), epsilon(1). F(0) has three main subunits: a(1), b(2) and c(10-14). The alpha and beta chains form an alternating ring which encloses part of the gamma chain. F(1) is attached to F(0) by a central stalk formed by the gamma and epsilon chains, while a peripheral stalk is formed by the delta and b chains.</text>
</comment>
<comment type="subcellular location">
    <subcellularLocation>
        <location evidence="1">Cell inner membrane</location>
        <topology evidence="1">Single-pass membrane protein</topology>
    </subcellularLocation>
</comment>
<comment type="similarity">
    <text evidence="1">Belongs to the ATPase B chain family.</text>
</comment>
<feature type="chain" id="PRO_0000368476" description="ATP synthase subunit b">
    <location>
        <begin position="1"/>
        <end position="156"/>
    </location>
</feature>
<feature type="transmembrane region" description="Helical" evidence="1">
    <location>
        <begin position="11"/>
        <end position="31"/>
    </location>
</feature>
<reference key="1">
    <citation type="journal article" date="2008" name="J. Bacteriol.">
        <title>Insights into the environmental resistance gene pool from the genome sequence of the multidrug-resistant environmental isolate Escherichia coli SMS-3-5.</title>
        <authorList>
            <person name="Fricke W.F."/>
            <person name="Wright M.S."/>
            <person name="Lindell A.H."/>
            <person name="Harkins D.M."/>
            <person name="Baker-Austin C."/>
            <person name="Ravel J."/>
            <person name="Stepanauskas R."/>
        </authorList>
    </citation>
    <scope>NUCLEOTIDE SEQUENCE [LARGE SCALE GENOMIC DNA]</scope>
    <source>
        <strain>SMS-3-5 / SECEC</strain>
    </source>
</reference>
<protein>
    <recommendedName>
        <fullName evidence="1">ATP synthase subunit b</fullName>
    </recommendedName>
    <alternativeName>
        <fullName evidence="1">ATP synthase F(0) sector subunit b</fullName>
    </alternativeName>
    <alternativeName>
        <fullName evidence="1">ATPase subunit I</fullName>
    </alternativeName>
    <alternativeName>
        <fullName evidence="1">F-type ATPase subunit b</fullName>
        <shortName evidence="1">F-ATPase subunit b</shortName>
    </alternativeName>
</protein>
<name>ATPF_ECOSM</name>
<organism>
    <name type="scientific">Escherichia coli (strain SMS-3-5 / SECEC)</name>
    <dbReference type="NCBI Taxonomy" id="439855"/>
    <lineage>
        <taxon>Bacteria</taxon>
        <taxon>Pseudomonadati</taxon>
        <taxon>Pseudomonadota</taxon>
        <taxon>Gammaproteobacteria</taxon>
        <taxon>Enterobacterales</taxon>
        <taxon>Enterobacteriaceae</taxon>
        <taxon>Escherichia</taxon>
    </lineage>
</organism>
<gene>
    <name evidence="1" type="primary">atpF</name>
    <name type="ordered locus">EcSMS35_4104</name>
</gene>
<accession>B1LL63</accession>
<proteinExistence type="inferred from homology"/>
<keyword id="KW-0066">ATP synthesis</keyword>
<keyword id="KW-0997">Cell inner membrane</keyword>
<keyword id="KW-1003">Cell membrane</keyword>
<keyword id="KW-0138">CF(0)</keyword>
<keyword id="KW-0375">Hydrogen ion transport</keyword>
<keyword id="KW-0406">Ion transport</keyword>
<keyword id="KW-0472">Membrane</keyword>
<keyword id="KW-0812">Transmembrane</keyword>
<keyword id="KW-1133">Transmembrane helix</keyword>
<keyword id="KW-0813">Transport</keyword>